<feature type="chain" id="PRO_1000078234" description="Histidine ammonia-lyase">
    <location>
        <begin position="1"/>
        <end position="504"/>
    </location>
</feature>
<feature type="modified residue" description="2,3-didehydroalanine (Ser)" evidence="1">
    <location>
        <position position="143"/>
    </location>
</feature>
<feature type="cross-link" description="5-imidazolinone (Ala-Gly)" evidence="1">
    <location>
        <begin position="142"/>
        <end position="144"/>
    </location>
</feature>
<dbReference type="EC" id="4.3.1.3" evidence="1"/>
<dbReference type="EMBL" id="CP000730">
    <property type="protein sequence ID" value="ABX28054.1"/>
    <property type="molecule type" value="Genomic_DNA"/>
</dbReference>
<dbReference type="RefSeq" id="WP_000177464.1">
    <property type="nucleotide sequence ID" value="NC_010079.1"/>
</dbReference>
<dbReference type="SMR" id="A8YYT1"/>
<dbReference type="KEGG" id="sax:USA300HOU_0008"/>
<dbReference type="HOGENOM" id="CLU_014801_4_0_9"/>
<dbReference type="UniPathway" id="UPA00379">
    <property type="reaction ID" value="UER00549"/>
</dbReference>
<dbReference type="GO" id="GO:0005737">
    <property type="term" value="C:cytoplasm"/>
    <property type="evidence" value="ECO:0007669"/>
    <property type="project" value="UniProtKB-SubCell"/>
</dbReference>
<dbReference type="GO" id="GO:0004397">
    <property type="term" value="F:histidine ammonia-lyase activity"/>
    <property type="evidence" value="ECO:0007669"/>
    <property type="project" value="UniProtKB-UniRule"/>
</dbReference>
<dbReference type="GO" id="GO:0019556">
    <property type="term" value="P:L-histidine catabolic process to glutamate and formamide"/>
    <property type="evidence" value="ECO:0007669"/>
    <property type="project" value="UniProtKB-UniPathway"/>
</dbReference>
<dbReference type="GO" id="GO:0019557">
    <property type="term" value="P:L-histidine catabolic process to glutamate and formate"/>
    <property type="evidence" value="ECO:0007669"/>
    <property type="project" value="UniProtKB-UniPathway"/>
</dbReference>
<dbReference type="CDD" id="cd00332">
    <property type="entry name" value="PAL-HAL"/>
    <property type="match status" value="1"/>
</dbReference>
<dbReference type="FunFam" id="1.10.275.10:FF:000008">
    <property type="entry name" value="Histidine ammonia-lyase"/>
    <property type="match status" value="1"/>
</dbReference>
<dbReference type="FunFam" id="1.20.200.10:FF:000003">
    <property type="entry name" value="Histidine ammonia-lyase"/>
    <property type="match status" value="1"/>
</dbReference>
<dbReference type="Gene3D" id="1.20.200.10">
    <property type="entry name" value="Fumarase/aspartase (Central domain)"/>
    <property type="match status" value="1"/>
</dbReference>
<dbReference type="Gene3D" id="1.10.275.10">
    <property type="entry name" value="Fumarase/aspartase (N-terminal domain)"/>
    <property type="match status" value="1"/>
</dbReference>
<dbReference type="HAMAP" id="MF_00229">
    <property type="entry name" value="His_ammonia_lyase"/>
    <property type="match status" value="1"/>
</dbReference>
<dbReference type="InterPro" id="IPR001106">
    <property type="entry name" value="Aromatic_Lyase"/>
</dbReference>
<dbReference type="InterPro" id="IPR024083">
    <property type="entry name" value="Fumarase/histidase_N"/>
</dbReference>
<dbReference type="InterPro" id="IPR005921">
    <property type="entry name" value="HutH"/>
</dbReference>
<dbReference type="InterPro" id="IPR008948">
    <property type="entry name" value="L-Aspartase-like"/>
</dbReference>
<dbReference type="InterPro" id="IPR022313">
    <property type="entry name" value="Phe/His_NH3-lyase_AS"/>
</dbReference>
<dbReference type="NCBIfam" id="TIGR01225">
    <property type="entry name" value="hutH"/>
    <property type="match status" value="1"/>
</dbReference>
<dbReference type="NCBIfam" id="NF006871">
    <property type="entry name" value="PRK09367.1"/>
    <property type="match status" value="1"/>
</dbReference>
<dbReference type="PANTHER" id="PTHR10362">
    <property type="entry name" value="HISTIDINE AMMONIA-LYASE"/>
    <property type="match status" value="1"/>
</dbReference>
<dbReference type="Pfam" id="PF00221">
    <property type="entry name" value="Lyase_aromatic"/>
    <property type="match status" value="1"/>
</dbReference>
<dbReference type="SUPFAM" id="SSF48557">
    <property type="entry name" value="L-aspartase-like"/>
    <property type="match status" value="1"/>
</dbReference>
<dbReference type="PROSITE" id="PS00488">
    <property type="entry name" value="PAL_HISTIDASE"/>
    <property type="match status" value="1"/>
</dbReference>
<comment type="catalytic activity">
    <reaction evidence="1">
        <text>L-histidine = trans-urocanate + NH4(+)</text>
        <dbReference type="Rhea" id="RHEA:21232"/>
        <dbReference type="ChEBI" id="CHEBI:17771"/>
        <dbReference type="ChEBI" id="CHEBI:28938"/>
        <dbReference type="ChEBI" id="CHEBI:57595"/>
        <dbReference type="EC" id="4.3.1.3"/>
    </reaction>
</comment>
<comment type="pathway">
    <text evidence="1">Amino-acid degradation; L-histidine degradation into L-glutamate; N-formimidoyl-L-glutamate from L-histidine: step 1/3.</text>
</comment>
<comment type="subcellular location">
    <subcellularLocation>
        <location evidence="1">Cytoplasm</location>
    </subcellularLocation>
</comment>
<comment type="PTM">
    <text evidence="1">Contains an active site 4-methylidene-imidazol-5-one (MIO), which is formed autocatalytically by cyclization and dehydration of residues Ala-Ser-Gly.</text>
</comment>
<comment type="similarity">
    <text evidence="1">Belongs to the PAL/histidase family.</text>
</comment>
<accession>A8YYT1</accession>
<sequence length="504" mass="56076">MTLYLDGETLTIEDIKSFLQQQSKIEIIDDALERVKKSRAVVERIIENEETVYGITTGFGLFSDVRIDPTQYNELQVNLIRSHACGLGEPFSKEVALVMMILRLNTLLKGHSGATLELVRQLQFFINERIIPIIPQQGSLGASGDLAPLSHLALALIGEGKVLYRGEEKDSDDVLRELNRQPLNLQAKEGLALINGTQAMTAQGVISYIEAEDLGYQSEWIAALTHQSLNGIIDAYRHDVHAVRNFQEQINVAARMRDWLEGSTLTTRQSEIRVQDAYTLRCIPQIHGASFQVFNYVKQQLEFEMNAANDNPLIFEEANETFVISGGNFHGQPIAFALDHLKLGVSELANVSERRLERLVNPQLNGDLPAFLSPEPGLQSGAMIMQYAAASLVSENKTLAHPASVDSITSSANQEDHVSMGTTAARHGYQIIENARRVLAIECVIALQAAELKGVEGLSPKTRRKYDEFRSIVPSITHDRQFHKDIEAVAQYLKQSIYQTTACH</sequence>
<proteinExistence type="inferred from homology"/>
<gene>
    <name evidence="1" type="primary">hutH</name>
    <name type="ordered locus">USA300HOU_0008</name>
</gene>
<keyword id="KW-0963">Cytoplasm</keyword>
<keyword id="KW-0369">Histidine metabolism</keyword>
<keyword id="KW-0456">Lyase</keyword>
<organism>
    <name type="scientific">Staphylococcus aureus (strain USA300 / TCH1516)</name>
    <dbReference type="NCBI Taxonomy" id="451516"/>
    <lineage>
        <taxon>Bacteria</taxon>
        <taxon>Bacillati</taxon>
        <taxon>Bacillota</taxon>
        <taxon>Bacilli</taxon>
        <taxon>Bacillales</taxon>
        <taxon>Staphylococcaceae</taxon>
        <taxon>Staphylococcus</taxon>
    </lineage>
</organism>
<name>HUTH_STAAT</name>
<protein>
    <recommendedName>
        <fullName evidence="1">Histidine ammonia-lyase</fullName>
        <shortName evidence="1">Histidase</shortName>
        <ecNumber evidence="1">4.3.1.3</ecNumber>
    </recommendedName>
</protein>
<reference key="1">
    <citation type="journal article" date="2007" name="BMC Microbiol.">
        <title>Subtle genetic changes enhance virulence of methicillin resistant and sensitive Staphylococcus aureus.</title>
        <authorList>
            <person name="Highlander S.K."/>
            <person name="Hulten K.G."/>
            <person name="Qin X."/>
            <person name="Jiang H."/>
            <person name="Yerrapragada S."/>
            <person name="Mason E.O. Jr."/>
            <person name="Shang Y."/>
            <person name="Williams T.M."/>
            <person name="Fortunov R.M."/>
            <person name="Liu Y."/>
            <person name="Igboeli O."/>
            <person name="Petrosino J."/>
            <person name="Tirumalai M."/>
            <person name="Uzman A."/>
            <person name="Fox G.E."/>
            <person name="Cardenas A.M."/>
            <person name="Muzny D.M."/>
            <person name="Hemphill L."/>
            <person name="Ding Y."/>
            <person name="Dugan S."/>
            <person name="Blyth P.R."/>
            <person name="Buhay C.J."/>
            <person name="Dinh H.H."/>
            <person name="Hawes A.C."/>
            <person name="Holder M."/>
            <person name="Kovar C.L."/>
            <person name="Lee S.L."/>
            <person name="Liu W."/>
            <person name="Nazareth L.V."/>
            <person name="Wang Q."/>
            <person name="Zhou J."/>
            <person name="Kaplan S.L."/>
            <person name="Weinstock G.M."/>
        </authorList>
    </citation>
    <scope>NUCLEOTIDE SEQUENCE [LARGE SCALE GENOMIC DNA]</scope>
    <source>
        <strain>USA300 / TCH1516</strain>
    </source>
</reference>
<evidence type="ECO:0000255" key="1">
    <source>
        <dbReference type="HAMAP-Rule" id="MF_00229"/>
    </source>
</evidence>